<accession>B9LPV4</accession>
<gene>
    <name evidence="1" type="primary">cmk</name>
    <name type="ordered locus">Hlac_1813</name>
</gene>
<protein>
    <recommendedName>
        <fullName evidence="1">Cytidylate kinase</fullName>
        <shortName evidence="1">CK</shortName>
        <ecNumber evidence="1">2.7.4.25</ecNumber>
    </recommendedName>
    <alternativeName>
        <fullName evidence="1">Cytidine monophosphate kinase</fullName>
        <shortName evidence="1">CMP kinase</shortName>
    </alternativeName>
</protein>
<keyword id="KW-0067">ATP-binding</keyword>
<keyword id="KW-0963">Cytoplasm</keyword>
<keyword id="KW-0418">Kinase</keyword>
<keyword id="KW-0547">Nucleotide-binding</keyword>
<keyword id="KW-1185">Reference proteome</keyword>
<keyword id="KW-0808">Transferase</keyword>
<feature type="chain" id="PRO_1000125311" description="Cytidylate kinase">
    <location>
        <begin position="1"/>
        <end position="192"/>
    </location>
</feature>
<feature type="binding site" evidence="1">
    <location>
        <begin position="7"/>
        <end position="15"/>
    </location>
    <ligand>
        <name>ATP</name>
        <dbReference type="ChEBI" id="CHEBI:30616"/>
    </ligand>
</feature>
<comment type="catalytic activity">
    <reaction evidence="1">
        <text>CMP + ATP = CDP + ADP</text>
        <dbReference type="Rhea" id="RHEA:11600"/>
        <dbReference type="ChEBI" id="CHEBI:30616"/>
        <dbReference type="ChEBI" id="CHEBI:58069"/>
        <dbReference type="ChEBI" id="CHEBI:60377"/>
        <dbReference type="ChEBI" id="CHEBI:456216"/>
        <dbReference type="EC" id="2.7.4.25"/>
    </reaction>
</comment>
<comment type="catalytic activity">
    <reaction evidence="1">
        <text>dCMP + ATP = dCDP + ADP</text>
        <dbReference type="Rhea" id="RHEA:25094"/>
        <dbReference type="ChEBI" id="CHEBI:30616"/>
        <dbReference type="ChEBI" id="CHEBI:57566"/>
        <dbReference type="ChEBI" id="CHEBI:58593"/>
        <dbReference type="ChEBI" id="CHEBI:456216"/>
        <dbReference type="EC" id="2.7.4.25"/>
    </reaction>
</comment>
<comment type="subcellular location">
    <subcellularLocation>
        <location evidence="1">Cytoplasm</location>
    </subcellularLocation>
</comment>
<comment type="similarity">
    <text evidence="1">Belongs to the cytidylate kinase family. Type 2 subfamily.</text>
</comment>
<sequence>MLITVSGPPGSGKSTNAAGLADRLGLDHVSGGDIFREMAAERDMTPVEFNEFAEEDPQIDRDLDRRLHEIATTRDDLVLESRLAGWLSADHADFRFWFDAPVSTRAERIAEREEKPVDRAKAETERREASEKKRYREYYDIDIGDLSIYDAAYNTARWGPERFIDVLVATIDAYDPATDEGKAPIEGVSYDF</sequence>
<name>KCY_HALLT</name>
<organism>
    <name type="scientific">Halorubrum lacusprofundi (strain ATCC 49239 / DSM 5036 / JCM 8891 / ACAM 34)</name>
    <dbReference type="NCBI Taxonomy" id="416348"/>
    <lineage>
        <taxon>Archaea</taxon>
        <taxon>Methanobacteriati</taxon>
        <taxon>Methanobacteriota</taxon>
        <taxon>Stenosarchaea group</taxon>
        <taxon>Halobacteria</taxon>
        <taxon>Halobacteriales</taxon>
        <taxon>Haloferacaceae</taxon>
        <taxon>Halorubrum</taxon>
    </lineage>
</organism>
<reference key="1">
    <citation type="journal article" date="2016" name="Stand. Genomic Sci.">
        <title>Complete genome sequence of the Antarctic Halorubrum lacusprofundi type strain ACAM 34.</title>
        <authorList>
            <person name="Anderson I.J."/>
            <person name="DasSarma P."/>
            <person name="Lucas S."/>
            <person name="Copeland A."/>
            <person name="Lapidus A."/>
            <person name="Del Rio T.G."/>
            <person name="Tice H."/>
            <person name="Dalin E."/>
            <person name="Bruce D.C."/>
            <person name="Goodwin L."/>
            <person name="Pitluck S."/>
            <person name="Sims D."/>
            <person name="Brettin T.S."/>
            <person name="Detter J.C."/>
            <person name="Han C.S."/>
            <person name="Larimer F."/>
            <person name="Hauser L."/>
            <person name="Land M."/>
            <person name="Ivanova N."/>
            <person name="Richardson P."/>
            <person name="Cavicchioli R."/>
            <person name="DasSarma S."/>
            <person name="Woese C.R."/>
            <person name="Kyrpides N.C."/>
        </authorList>
    </citation>
    <scope>NUCLEOTIDE SEQUENCE [LARGE SCALE GENOMIC DNA]</scope>
    <source>
        <strain>ATCC 49239 / DSM 5036 / JCM 8891 / ACAM 34</strain>
    </source>
</reference>
<dbReference type="EC" id="2.7.4.25" evidence="1"/>
<dbReference type="EMBL" id="CP001365">
    <property type="protein sequence ID" value="ACM57392.1"/>
    <property type="molecule type" value="Genomic_DNA"/>
</dbReference>
<dbReference type="RefSeq" id="WP_015910528.1">
    <property type="nucleotide sequence ID" value="NC_012029.1"/>
</dbReference>
<dbReference type="SMR" id="B9LPV4"/>
<dbReference type="GeneID" id="7399688"/>
<dbReference type="KEGG" id="hla:Hlac_1813"/>
<dbReference type="eggNOG" id="arCOG01037">
    <property type="taxonomic scope" value="Archaea"/>
</dbReference>
<dbReference type="HOGENOM" id="CLU_079959_1_0_2"/>
<dbReference type="Proteomes" id="UP000000740">
    <property type="component" value="Chromosome 1"/>
</dbReference>
<dbReference type="GO" id="GO:0005737">
    <property type="term" value="C:cytoplasm"/>
    <property type="evidence" value="ECO:0007669"/>
    <property type="project" value="UniProtKB-SubCell"/>
</dbReference>
<dbReference type="GO" id="GO:0005524">
    <property type="term" value="F:ATP binding"/>
    <property type="evidence" value="ECO:0007669"/>
    <property type="project" value="UniProtKB-UniRule"/>
</dbReference>
<dbReference type="GO" id="GO:0036430">
    <property type="term" value="F:CMP kinase activity"/>
    <property type="evidence" value="ECO:0007669"/>
    <property type="project" value="RHEA"/>
</dbReference>
<dbReference type="GO" id="GO:0036431">
    <property type="term" value="F:dCMP kinase activity"/>
    <property type="evidence" value="ECO:0007669"/>
    <property type="project" value="RHEA"/>
</dbReference>
<dbReference type="GO" id="GO:0006220">
    <property type="term" value="P:pyrimidine nucleotide metabolic process"/>
    <property type="evidence" value="ECO:0007669"/>
    <property type="project" value="UniProtKB-UniRule"/>
</dbReference>
<dbReference type="CDD" id="cd02020">
    <property type="entry name" value="CMPK"/>
    <property type="match status" value="1"/>
</dbReference>
<dbReference type="Gene3D" id="3.40.50.300">
    <property type="entry name" value="P-loop containing nucleotide triphosphate hydrolases"/>
    <property type="match status" value="1"/>
</dbReference>
<dbReference type="HAMAP" id="MF_00239">
    <property type="entry name" value="Cytidyl_kinase_type2"/>
    <property type="match status" value="1"/>
</dbReference>
<dbReference type="InterPro" id="IPR011892">
    <property type="entry name" value="Cyt_kin_arch"/>
</dbReference>
<dbReference type="InterPro" id="IPR011994">
    <property type="entry name" value="Cytidylate_kinase_dom"/>
</dbReference>
<dbReference type="InterPro" id="IPR027417">
    <property type="entry name" value="P-loop_NTPase"/>
</dbReference>
<dbReference type="NCBIfam" id="TIGR02173">
    <property type="entry name" value="cyt_kin_arch"/>
    <property type="match status" value="1"/>
</dbReference>
<dbReference type="Pfam" id="PF13189">
    <property type="entry name" value="Cytidylate_kin2"/>
    <property type="match status" value="1"/>
</dbReference>
<dbReference type="SUPFAM" id="SSF52540">
    <property type="entry name" value="P-loop containing nucleoside triphosphate hydrolases"/>
    <property type="match status" value="1"/>
</dbReference>
<evidence type="ECO:0000255" key="1">
    <source>
        <dbReference type="HAMAP-Rule" id="MF_00239"/>
    </source>
</evidence>
<proteinExistence type="inferred from homology"/>